<dbReference type="EC" id="2.1.1.148" evidence="1"/>
<dbReference type="EMBL" id="M27713">
    <property type="protein sequence ID" value="AAA33257.1"/>
    <property type="status" value="ALT_FRAME"/>
    <property type="molecule type" value="Genomic_DNA"/>
</dbReference>
<dbReference type="EMBL" id="AAFI02000035">
    <property type="protein sequence ID" value="EAL67249.1"/>
    <property type="molecule type" value="Genomic_DNA"/>
</dbReference>
<dbReference type="PIR" id="A33987">
    <property type="entry name" value="YXDOTC"/>
</dbReference>
<dbReference type="RefSeq" id="XP_641335.1">
    <property type="nucleotide sequence ID" value="XM_636243.1"/>
</dbReference>
<dbReference type="SMR" id="P15808"/>
<dbReference type="FunCoup" id="P15808">
    <property type="interactions" value="44"/>
</dbReference>
<dbReference type="STRING" id="44689.P15808"/>
<dbReference type="PaxDb" id="44689-DDB0214905"/>
<dbReference type="EnsemblProtists" id="EAL67249">
    <property type="protein sequence ID" value="EAL67249"/>
    <property type="gene ID" value="DDB_G0280045"/>
</dbReference>
<dbReference type="GeneID" id="8622469"/>
<dbReference type="KEGG" id="ddi:DDB_G0280045"/>
<dbReference type="dictyBase" id="DDB_G0280045">
    <property type="gene designation" value="thyA"/>
</dbReference>
<dbReference type="VEuPathDB" id="AmoebaDB:DDB_G0280045"/>
<dbReference type="eggNOG" id="ENOG502SRAF">
    <property type="taxonomic scope" value="Eukaryota"/>
</dbReference>
<dbReference type="HOGENOM" id="CLU_067790_0_0_1"/>
<dbReference type="InParanoid" id="P15808"/>
<dbReference type="OMA" id="PVACEAF"/>
<dbReference type="PhylomeDB" id="P15808"/>
<dbReference type="UniPathway" id="UPA00575"/>
<dbReference type="PRO" id="PR:P15808"/>
<dbReference type="Proteomes" id="UP000002195">
    <property type="component" value="Chromosome 3"/>
</dbReference>
<dbReference type="GO" id="GO:0045335">
    <property type="term" value="C:phagocytic vesicle"/>
    <property type="evidence" value="ECO:0007005"/>
    <property type="project" value="dictyBase"/>
</dbReference>
<dbReference type="GO" id="GO:0050660">
    <property type="term" value="F:flavin adenine dinucleotide binding"/>
    <property type="evidence" value="ECO:0000318"/>
    <property type="project" value="GO_Central"/>
</dbReference>
<dbReference type="GO" id="GO:0070402">
    <property type="term" value="F:NADPH binding"/>
    <property type="evidence" value="ECO:0000318"/>
    <property type="project" value="GO_Central"/>
</dbReference>
<dbReference type="GO" id="GO:0050797">
    <property type="term" value="F:thymidylate synthase (FAD) activity"/>
    <property type="evidence" value="ECO:0000316"/>
    <property type="project" value="dictyBase"/>
</dbReference>
<dbReference type="GO" id="GO:0004799">
    <property type="term" value="F:thymidylate synthase activity"/>
    <property type="evidence" value="ECO:0000318"/>
    <property type="project" value="GO_Central"/>
</dbReference>
<dbReference type="GO" id="GO:0006231">
    <property type="term" value="P:dTMP biosynthetic process"/>
    <property type="evidence" value="ECO:0000316"/>
    <property type="project" value="dictyBase"/>
</dbReference>
<dbReference type="GO" id="GO:0006235">
    <property type="term" value="P:dTTP biosynthetic process"/>
    <property type="evidence" value="ECO:0007669"/>
    <property type="project" value="UniProtKB-UniPathway"/>
</dbReference>
<dbReference type="GO" id="GO:0032259">
    <property type="term" value="P:methylation"/>
    <property type="evidence" value="ECO:0007669"/>
    <property type="project" value="UniProtKB-KW"/>
</dbReference>
<dbReference type="CDD" id="cd20175">
    <property type="entry name" value="ThyX"/>
    <property type="match status" value="1"/>
</dbReference>
<dbReference type="FunFam" id="3.30.1360.170:FF:000001">
    <property type="entry name" value="Flavin-dependent thymidylate synthase"/>
    <property type="match status" value="1"/>
</dbReference>
<dbReference type="Gene3D" id="3.30.1360.170">
    <property type="match status" value="1"/>
</dbReference>
<dbReference type="HAMAP" id="MF_01408">
    <property type="entry name" value="ThyX"/>
    <property type="match status" value="1"/>
</dbReference>
<dbReference type="InterPro" id="IPR003669">
    <property type="entry name" value="Thymidylate_synthase_ThyX"/>
</dbReference>
<dbReference type="InterPro" id="IPR036098">
    <property type="entry name" value="Thymidylate_synthase_ThyX_sf"/>
</dbReference>
<dbReference type="NCBIfam" id="TIGR02170">
    <property type="entry name" value="thyX"/>
    <property type="match status" value="1"/>
</dbReference>
<dbReference type="PANTHER" id="PTHR34934">
    <property type="entry name" value="FLAVIN-DEPENDENT THYMIDYLATE SYNTHASE"/>
    <property type="match status" value="1"/>
</dbReference>
<dbReference type="PANTHER" id="PTHR34934:SF1">
    <property type="entry name" value="FLAVIN-DEPENDENT THYMIDYLATE SYNTHASE"/>
    <property type="match status" value="1"/>
</dbReference>
<dbReference type="Pfam" id="PF02511">
    <property type="entry name" value="Thy1"/>
    <property type="match status" value="1"/>
</dbReference>
<dbReference type="SUPFAM" id="SSF69796">
    <property type="entry name" value="Thymidylate synthase-complementing protein Thy1"/>
    <property type="match status" value="1"/>
</dbReference>
<dbReference type="PROSITE" id="PS51331">
    <property type="entry name" value="THYX"/>
    <property type="match status" value="1"/>
</dbReference>
<name>THY1_DICDI</name>
<sequence>MGLDIQTEIDKIVIEKVKPEVEYYDVMGGSHRWEVKVHDHGKVALVDTMPRLAPVGQTADFSICQAARVSYGAGTKKVTEDKGLIRYLYRHQHTSPFEMVEFKFHCVMPVFIARQWIRHRTANVNEYSARYSVLPDKFYHPSIEEVRKQSTSNRQGGEEALEPKTAQEFLDYLDKVEENYKTYNELLEKGLSRELGRIGLPVSIYTEWYWKIDLHNLFHFLRLRMDSHSQKEIRDYANTIFALIRPIVPVACEAFIDYAFESLKLTRLEIEAIRTGSPLNTTNKREIEEFEEKKKLLFPNTQA</sequence>
<protein>
    <recommendedName>
        <fullName evidence="1">Flavin-dependent thymidylate synthase</fullName>
        <shortName evidence="1">FDTS</shortName>
        <ecNumber evidence="1">2.1.1.148</ecNumber>
    </recommendedName>
    <alternativeName>
        <fullName evidence="1">FAD-dependent thymidylate synthase</fullName>
    </alternativeName>
    <alternativeName>
        <fullName evidence="1">Thymidylate synthase thy1</fullName>
        <shortName evidence="1">TS</shortName>
        <shortName evidence="1">TSase</shortName>
    </alternativeName>
</protein>
<organism>
    <name type="scientific">Dictyostelium discoideum</name>
    <name type="common">Social amoeba</name>
    <dbReference type="NCBI Taxonomy" id="44689"/>
    <lineage>
        <taxon>Eukaryota</taxon>
        <taxon>Amoebozoa</taxon>
        <taxon>Evosea</taxon>
        <taxon>Eumycetozoa</taxon>
        <taxon>Dictyostelia</taxon>
        <taxon>Dictyosteliales</taxon>
        <taxon>Dictyosteliaceae</taxon>
        <taxon>Dictyostelium</taxon>
    </lineage>
</organism>
<proteinExistence type="inferred from homology"/>
<reference key="1">
    <citation type="journal article" date="1989" name="Proc. Natl. Acad. Sci. U.S.A.">
        <title>Molecular complementation of a genetic marker in Dictyostelium using a genomic DNA library.</title>
        <authorList>
            <person name="Dynes J.L."/>
            <person name="Firtel R.A."/>
        </authorList>
    </citation>
    <scope>NUCLEOTIDE SEQUENCE [GENOMIC DNA]</scope>
</reference>
<reference key="2">
    <citation type="journal article" date="2005" name="Nature">
        <title>The genome of the social amoeba Dictyostelium discoideum.</title>
        <authorList>
            <person name="Eichinger L."/>
            <person name="Pachebat J.A."/>
            <person name="Gloeckner G."/>
            <person name="Rajandream M.A."/>
            <person name="Sucgang R."/>
            <person name="Berriman M."/>
            <person name="Song J."/>
            <person name="Olsen R."/>
            <person name="Szafranski K."/>
            <person name="Xu Q."/>
            <person name="Tunggal B."/>
            <person name="Kummerfeld S."/>
            <person name="Madera M."/>
            <person name="Konfortov B.A."/>
            <person name="Rivero F."/>
            <person name="Bankier A.T."/>
            <person name="Lehmann R."/>
            <person name="Hamlin N."/>
            <person name="Davies R."/>
            <person name="Gaudet P."/>
            <person name="Fey P."/>
            <person name="Pilcher K."/>
            <person name="Chen G."/>
            <person name="Saunders D."/>
            <person name="Sodergren E.J."/>
            <person name="Davis P."/>
            <person name="Kerhornou A."/>
            <person name="Nie X."/>
            <person name="Hall N."/>
            <person name="Anjard C."/>
            <person name="Hemphill L."/>
            <person name="Bason N."/>
            <person name="Farbrother P."/>
            <person name="Desany B."/>
            <person name="Just E."/>
            <person name="Morio T."/>
            <person name="Rost R."/>
            <person name="Churcher C.M."/>
            <person name="Cooper J."/>
            <person name="Haydock S."/>
            <person name="van Driessche N."/>
            <person name="Cronin A."/>
            <person name="Goodhead I."/>
            <person name="Muzny D.M."/>
            <person name="Mourier T."/>
            <person name="Pain A."/>
            <person name="Lu M."/>
            <person name="Harper D."/>
            <person name="Lindsay R."/>
            <person name="Hauser H."/>
            <person name="James K.D."/>
            <person name="Quiles M."/>
            <person name="Madan Babu M."/>
            <person name="Saito T."/>
            <person name="Buchrieser C."/>
            <person name="Wardroper A."/>
            <person name="Felder M."/>
            <person name="Thangavelu M."/>
            <person name="Johnson D."/>
            <person name="Knights A."/>
            <person name="Loulseged H."/>
            <person name="Mungall K.L."/>
            <person name="Oliver K."/>
            <person name="Price C."/>
            <person name="Quail M.A."/>
            <person name="Urushihara H."/>
            <person name="Hernandez J."/>
            <person name="Rabbinowitsch E."/>
            <person name="Steffen D."/>
            <person name="Sanders M."/>
            <person name="Ma J."/>
            <person name="Kohara Y."/>
            <person name="Sharp S."/>
            <person name="Simmonds M.N."/>
            <person name="Spiegler S."/>
            <person name="Tivey A."/>
            <person name="Sugano S."/>
            <person name="White B."/>
            <person name="Walker D."/>
            <person name="Woodward J.R."/>
            <person name="Winckler T."/>
            <person name="Tanaka Y."/>
            <person name="Shaulsky G."/>
            <person name="Schleicher M."/>
            <person name="Weinstock G.M."/>
            <person name="Rosenthal A."/>
            <person name="Cox E.C."/>
            <person name="Chisholm R.L."/>
            <person name="Gibbs R.A."/>
            <person name="Loomis W.F."/>
            <person name="Platzer M."/>
            <person name="Kay R.R."/>
            <person name="Williams J.G."/>
            <person name="Dear P.H."/>
            <person name="Noegel A.A."/>
            <person name="Barrell B.G."/>
            <person name="Kuspa A."/>
        </authorList>
    </citation>
    <scope>NUCLEOTIDE SEQUENCE [LARGE SCALE GENOMIC DNA]</scope>
    <source>
        <strain>AX4</strain>
    </source>
</reference>
<accession>P15808</accession>
<accession>Q54VM0</accession>
<evidence type="ECO:0000250" key="1">
    <source>
        <dbReference type="UniProtKB" id="Q9WYT0"/>
    </source>
</evidence>
<evidence type="ECO:0000255" key="2">
    <source>
        <dbReference type="PROSITE-ProRule" id="PRU00661"/>
    </source>
</evidence>
<evidence type="ECO:0000305" key="3"/>
<gene>
    <name type="primary">thyA</name>
    <name type="synonym">thy1</name>
    <name type="ORF">DDB_G0280045</name>
</gene>
<keyword id="KW-0274">FAD</keyword>
<keyword id="KW-0285">Flavoprotein</keyword>
<keyword id="KW-0489">Methyltransferase</keyword>
<keyword id="KW-0521">NADP</keyword>
<keyword id="KW-0545">Nucleotide biosynthesis</keyword>
<keyword id="KW-1185">Reference proteome</keyword>
<keyword id="KW-0808">Transferase</keyword>
<comment type="function">
    <text evidence="1">Catalyzes the reductive methylation of 2'-deoxyuridine-5'-monophosphate (dUMP) to 2'-deoxythymidine-5'-monophosphate (dTMP) while utilizing 5,10-methylenetetrahydrofolate (mTHF) as the methyl donor, and NADPH and FADH(2) as the reductant.</text>
</comment>
<comment type="catalytic activity">
    <reaction evidence="1">
        <text>dUMP + (6R)-5,10-methylene-5,6,7,8-tetrahydrofolate + NADPH + H(+) = dTMP + (6S)-5,6,7,8-tetrahydrofolate + NADP(+)</text>
        <dbReference type="Rhea" id="RHEA:29043"/>
        <dbReference type="ChEBI" id="CHEBI:15378"/>
        <dbReference type="ChEBI" id="CHEBI:15636"/>
        <dbReference type="ChEBI" id="CHEBI:57453"/>
        <dbReference type="ChEBI" id="CHEBI:57783"/>
        <dbReference type="ChEBI" id="CHEBI:58349"/>
        <dbReference type="ChEBI" id="CHEBI:63528"/>
        <dbReference type="ChEBI" id="CHEBI:246422"/>
        <dbReference type="EC" id="2.1.1.148"/>
    </reaction>
</comment>
<comment type="cofactor">
    <cofactor evidence="1">
        <name>FAD</name>
        <dbReference type="ChEBI" id="CHEBI:57692"/>
    </cofactor>
    <text evidence="1">Binds 4 FAD per tetramer. Each FAD binding site is formed by three monomers.</text>
</comment>
<comment type="pathway">
    <text evidence="1">Pyrimidine metabolism; dTTP biosynthesis.</text>
</comment>
<comment type="subunit">
    <text evidence="1">Homotetramer.</text>
</comment>
<comment type="similarity">
    <text evidence="3">Belongs to the thymidylate synthase ThyX family.</text>
</comment>
<comment type="sequence caution" evidence="3">
    <conflict type="frameshift">
        <sequence resource="EMBL-CDS" id="AAA33257"/>
    </conflict>
</comment>
<feature type="chain" id="PRO_0000175599" description="Flavin-dependent thymidylate synthase">
    <location>
        <begin position="1"/>
        <end position="303"/>
    </location>
</feature>
<feature type="domain" description="ThyX" evidence="2">
    <location>
        <begin position="41"/>
        <end position="258"/>
    </location>
</feature>
<feature type="short sequence motif" description="ThyX motif" evidence="2">
    <location>
        <begin position="118"/>
        <end position="128"/>
    </location>
</feature>
<feature type="active site" description="Involved in ionization of N3 of dUMP, leading to its activation" evidence="1">
    <location>
        <position position="224"/>
    </location>
</feature>
<feature type="binding site" evidence="1">
    <location>
        <position position="95"/>
    </location>
    <ligand>
        <name>FAD</name>
        <dbReference type="ChEBI" id="CHEBI:57692"/>
        <note>ligand shared between neighboring subunits</note>
    </ligand>
</feature>
<feature type="binding site" evidence="1">
    <location>
        <begin position="115"/>
        <end position="118"/>
    </location>
    <ligand>
        <name>dUMP</name>
        <dbReference type="ChEBI" id="CHEBI:246422"/>
        <note>ligand shared between dimeric partners</note>
    </ligand>
</feature>
<feature type="binding site" evidence="1">
    <location>
        <begin position="118"/>
        <end position="120"/>
    </location>
    <ligand>
        <name>FAD</name>
        <dbReference type="ChEBI" id="CHEBI:57692"/>
        <note>ligand shared between neighboring subunits</note>
    </ligand>
</feature>
<feature type="binding site" description="in other chain" evidence="1">
    <location>
        <begin position="126"/>
        <end position="130"/>
    </location>
    <ligand>
        <name>dUMP</name>
        <dbReference type="ChEBI" id="CHEBI:246422"/>
        <note>ligand shared between dimeric partners</note>
    </ligand>
</feature>
<feature type="binding site" evidence="1">
    <location>
        <position position="126"/>
    </location>
    <ligand>
        <name>FAD</name>
        <dbReference type="ChEBI" id="CHEBI:57692"/>
        <note>ligand shared between neighboring subunits</note>
    </ligand>
</feature>
<feature type="binding site" description="in other chain" evidence="1">
    <location>
        <position position="197"/>
    </location>
    <ligand>
        <name>dUMP</name>
        <dbReference type="ChEBI" id="CHEBI:246422"/>
        <note>ligand shared between dimeric partners</note>
    </ligand>
</feature>
<feature type="binding site" evidence="1">
    <location>
        <begin position="213"/>
        <end position="215"/>
    </location>
    <ligand>
        <name>FAD</name>
        <dbReference type="ChEBI" id="CHEBI:57692"/>
        <note>ligand shared between neighboring subunits</note>
    </ligand>
</feature>
<feature type="binding site" evidence="1">
    <location>
        <position position="219"/>
    </location>
    <ligand>
        <name>FAD</name>
        <dbReference type="ChEBI" id="CHEBI:57692"/>
        <note>ligand shared between neighboring subunits</note>
    </ligand>
</feature>
<feature type="binding site" evidence="1">
    <location>
        <position position="224"/>
    </location>
    <ligand>
        <name>dUMP</name>
        <dbReference type="ChEBI" id="CHEBI:246422"/>
        <note>ligand shared between dimeric partners</note>
    </ligand>
</feature>